<name>CYB_ANTST</name>
<gene>
    <name type="primary">MT-CYB</name>
    <name type="synonym">COB</name>
    <name type="synonym">CYTB</name>
    <name type="synonym">MTCYB</name>
</gene>
<protein>
    <recommendedName>
        <fullName>Cytochrome b</fullName>
    </recommendedName>
    <alternativeName>
        <fullName>Complex III subunit 3</fullName>
    </alternativeName>
    <alternativeName>
        <fullName>Complex III subunit III</fullName>
    </alternativeName>
    <alternativeName>
        <fullName>Cytochrome b-c1 complex subunit 3</fullName>
    </alternativeName>
    <alternativeName>
        <fullName>Ubiquinol-cytochrome-c reductase complex cytochrome b subunit</fullName>
    </alternativeName>
</protein>
<geneLocation type="mitochondrion"/>
<feature type="chain" id="PRO_0000060600" description="Cytochrome b">
    <location>
        <begin position="1"/>
        <end position="381"/>
    </location>
</feature>
<feature type="transmembrane region" description="Helical" evidence="2">
    <location>
        <begin position="33"/>
        <end position="53"/>
    </location>
</feature>
<feature type="transmembrane region" description="Helical" evidence="2">
    <location>
        <begin position="77"/>
        <end position="98"/>
    </location>
</feature>
<feature type="transmembrane region" description="Helical" evidence="2">
    <location>
        <begin position="113"/>
        <end position="133"/>
    </location>
</feature>
<feature type="transmembrane region" description="Helical" evidence="2">
    <location>
        <begin position="178"/>
        <end position="198"/>
    </location>
</feature>
<feature type="transmembrane region" description="Helical" evidence="2">
    <location>
        <begin position="226"/>
        <end position="246"/>
    </location>
</feature>
<feature type="transmembrane region" description="Helical" evidence="2">
    <location>
        <begin position="288"/>
        <end position="308"/>
    </location>
</feature>
<feature type="transmembrane region" description="Helical" evidence="2">
    <location>
        <begin position="320"/>
        <end position="340"/>
    </location>
</feature>
<feature type="transmembrane region" description="Helical" evidence="2">
    <location>
        <begin position="347"/>
        <end position="367"/>
    </location>
</feature>
<feature type="binding site" description="axial binding residue" evidence="2">
    <location>
        <position position="83"/>
    </location>
    <ligand>
        <name>heme b</name>
        <dbReference type="ChEBI" id="CHEBI:60344"/>
        <label>b562</label>
    </ligand>
    <ligandPart>
        <name>Fe</name>
        <dbReference type="ChEBI" id="CHEBI:18248"/>
    </ligandPart>
</feature>
<feature type="binding site" description="axial binding residue" evidence="2">
    <location>
        <position position="97"/>
    </location>
    <ligand>
        <name>heme b</name>
        <dbReference type="ChEBI" id="CHEBI:60344"/>
        <label>b566</label>
    </ligand>
    <ligandPart>
        <name>Fe</name>
        <dbReference type="ChEBI" id="CHEBI:18248"/>
    </ligandPart>
</feature>
<feature type="binding site" description="axial binding residue" evidence="2">
    <location>
        <position position="182"/>
    </location>
    <ligand>
        <name>heme b</name>
        <dbReference type="ChEBI" id="CHEBI:60344"/>
        <label>b562</label>
    </ligand>
    <ligandPart>
        <name>Fe</name>
        <dbReference type="ChEBI" id="CHEBI:18248"/>
    </ligandPart>
</feature>
<feature type="binding site" description="axial binding residue" evidence="2">
    <location>
        <position position="196"/>
    </location>
    <ligand>
        <name>heme b</name>
        <dbReference type="ChEBI" id="CHEBI:60344"/>
        <label>b566</label>
    </ligand>
    <ligandPart>
        <name>Fe</name>
        <dbReference type="ChEBI" id="CHEBI:18248"/>
    </ligandPart>
</feature>
<feature type="binding site" evidence="2">
    <location>
        <position position="201"/>
    </location>
    <ligand>
        <name>a ubiquinone</name>
        <dbReference type="ChEBI" id="CHEBI:16389"/>
    </ligand>
</feature>
<sequence length="381" mass="42919">MINLRKTHPLMKIINHSFIDLPTPSNISAWWNFGSLLGVCLIIQILTGFFLAMHYTSDTLTAFSSVAHICRDVNYGWLIHNLHANGASMFFMCLFLHVGRGIYYGSYLYKETWNIGVILLLTEMATAFVGYVLPWGQMSFWGATVITNLLSAIPYIGTTLAEWIWGGFAVDKATLTRFFAFHFILPFIVMALAIVHLLFLHETGSNNPSGINPDSDKIPFHPYYTIKDALGLIFLFLILLLLALFSPDSLGDPDNFSPANPLNTPPHIKPEWYFLFAYAILRSIPNKLGGVLALLASILILLIIPLLHTANQRSMMFRPISQTLFWILTANLITLTWIGGQPVEQPFIIIGQLASMLYFLLILVLMPSAGLFENYMLKPKW</sequence>
<dbReference type="EMBL" id="M99454">
    <property type="protein sequence ID" value="AAB95427.1"/>
    <property type="molecule type" value="Genomic_DNA"/>
</dbReference>
<dbReference type="SMR" id="P92509"/>
<dbReference type="GO" id="GO:0005743">
    <property type="term" value="C:mitochondrial inner membrane"/>
    <property type="evidence" value="ECO:0007669"/>
    <property type="project" value="UniProtKB-SubCell"/>
</dbReference>
<dbReference type="GO" id="GO:0045275">
    <property type="term" value="C:respiratory chain complex III"/>
    <property type="evidence" value="ECO:0007669"/>
    <property type="project" value="InterPro"/>
</dbReference>
<dbReference type="GO" id="GO:0046872">
    <property type="term" value="F:metal ion binding"/>
    <property type="evidence" value="ECO:0007669"/>
    <property type="project" value="UniProtKB-KW"/>
</dbReference>
<dbReference type="GO" id="GO:0008121">
    <property type="term" value="F:ubiquinol-cytochrome-c reductase activity"/>
    <property type="evidence" value="ECO:0007669"/>
    <property type="project" value="InterPro"/>
</dbReference>
<dbReference type="GO" id="GO:0006122">
    <property type="term" value="P:mitochondrial electron transport, ubiquinol to cytochrome c"/>
    <property type="evidence" value="ECO:0007669"/>
    <property type="project" value="TreeGrafter"/>
</dbReference>
<dbReference type="CDD" id="cd00290">
    <property type="entry name" value="cytochrome_b_C"/>
    <property type="match status" value="1"/>
</dbReference>
<dbReference type="CDD" id="cd00284">
    <property type="entry name" value="Cytochrome_b_N"/>
    <property type="match status" value="1"/>
</dbReference>
<dbReference type="FunFam" id="1.20.810.10:FF:000002">
    <property type="entry name" value="Cytochrome b"/>
    <property type="match status" value="1"/>
</dbReference>
<dbReference type="Gene3D" id="1.20.810.10">
    <property type="entry name" value="Cytochrome Bc1 Complex, Chain C"/>
    <property type="match status" value="1"/>
</dbReference>
<dbReference type="InterPro" id="IPR005798">
    <property type="entry name" value="Cyt_b/b6_C"/>
</dbReference>
<dbReference type="InterPro" id="IPR036150">
    <property type="entry name" value="Cyt_b/b6_C_sf"/>
</dbReference>
<dbReference type="InterPro" id="IPR005797">
    <property type="entry name" value="Cyt_b/b6_N"/>
</dbReference>
<dbReference type="InterPro" id="IPR027387">
    <property type="entry name" value="Cytb/b6-like_sf"/>
</dbReference>
<dbReference type="InterPro" id="IPR030689">
    <property type="entry name" value="Cytochrome_b"/>
</dbReference>
<dbReference type="InterPro" id="IPR048260">
    <property type="entry name" value="Cytochrome_b_C_euk/bac"/>
</dbReference>
<dbReference type="InterPro" id="IPR048259">
    <property type="entry name" value="Cytochrome_b_N_euk/bac"/>
</dbReference>
<dbReference type="InterPro" id="IPR016174">
    <property type="entry name" value="Di-haem_cyt_TM"/>
</dbReference>
<dbReference type="PANTHER" id="PTHR19271">
    <property type="entry name" value="CYTOCHROME B"/>
    <property type="match status" value="1"/>
</dbReference>
<dbReference type="PANTHER" id="PTHR19271:SF16">
    <property type="entry name" value="CYTOCHROME B"/>
    <property type="match status" value="1"/>
</dbReference>
<dbReference type="Pfam" id="PF00032">
    <property type="entry name" value="Cytochrom_B_C"/>
    <property type="match status" value="1"/>
</dbReference>
<dbReference type="Pfam" id="PF00033">
    <property type="entry name" value="Cytochrome_B"/>
    <property type="match status" value="1"/>
</dbReference>
<dbReference type="PIRSF" id="PIRSF038885">
    <property type="entry name" value="COB"/>
    <property type="match status" value="1"/>
</dbReference>
<dbReference type="SUPFAM" id="SSF81648">
    <property type="entry name" value="a domain/subunit of cytochrome bc1 complex (Ubiquinol-cytochrome c reductase)"/>
    <property type="match status" value="1"/>
</dbReference>
<dbReference type="SUPFAM" id="SSF81342">
    <property type="entry name" value="Transmembrane di-heme cytochromes"/>
    <property type="match status" value="1"/>
</dbReference>
<dbReference type="PROSITE" id="PS51003">
    <property type="entry name" value="CYTB_CTER"/>
    <property type="match status" value="1"/>
</dbReference>
<dbReference type="PROSITE" id="PS51002">
    <property type="entry name" value="CYTB_NTER"/>
    <property type="match status" value="1"/>
</dbReference>
<accession>P92509</accession>
<organism>
    <name type="scientific">Antechinus stuartii</name>
    <name type="common">Brown marsupial mouse</name>
    <dbReference type="NCBI Taxonomy" id="9283"/>
    <lineage>
        <taxon>Eukaryota</taxon>
        <taxon>Metazoa</taxon>
        <taxon>Chordata</taxon>
        <taxon>Craniata</taxon>
        <taxon>Vertebrata</taxon>
        <taxon>Euteleostomi</taxon>
        <taxon>Mammalia</taxon>
        <taxon>Metatheria</taxon>
        <taxon>Dasyuromorphia</taxon>
        <taxon>Dasyuridae</taxon>
        <taxon>Antechinus</taxon>
    </lineage>
</organism>
<keyword id="KW-0249">Electron transport</keyword>
<keyword id="KW-0349">Heme</keyword>
<keyword id="KW-0408">Iron</keyword>
<keyword id="KW-0472">Membrane</keyword>
<keyword id="KW-0479">Metal-binding</keyword>
<keyword id="KW-0496">Mitochondrion</keyword>
<keyword id="KW-0999">Mitochondrion inner membrane</keyword>
<keyword id="KW-0679">Respiratory chain</keyword>
<keyword id="KW-0812">Transmembrane</keyword>
<keyword id="KW-1133">Transmembrane helix</keyword>
<keyword id="KW-0813">Transport</keyword>
<keyword id="KW-0830">Ubiquinone</keyword>
<comment type="function">
    <text evidence="2">Component of the ubiquinol-cytochrome c reductase complex (complex III or cytochrome b-c1 complex) that is part of the mitochondrial respiratory chain. The b-c1 complex mediates electron transfer from ubiquinol to cytochrome c. Contributes to the generation of a proton gradient across the mitochondrial membrane that is then used for ATP synthesis.</text>
</comment>
<comment type="cofactor">
    <cofactor evidence="2">
        <name>heme b</name>
        <dbReference type="ChEBI" id="CHEBI:60344"/>
    </cofactor>
    <text evidence="2">Binds 2 heme b groups non-covalently.</text>
</comment>
<comment type="subunit">
    <text evidence="2">The cytochrome bc1 complex contains 11 subunits: 3 respiratory subunits (MT-CYB, CYC1 and UQCRFS1), 2 core proteins (UQCRC1 and UQCRC2) and 6 low-molecular weight proteins (UQCRH/QCR6, UQCRB/QCR7, UQCRQ/QCR8, UQCR10/QCR9, UQCR11/QCR10 and a cleavage product of UQCRFS1). This cytochrome bc1 complex then forms a dimer.</text>
</comment>
<comment type="subcellular location">
    <subcellularLocation>
        <location evidence="2">Mitochondrion inner membrane</location>
        <topology evidence="2">Multi-pass membrane protein</topology>
    </subcellularLocation>
</comment>
<comment type="miscellaneous">
    <text evidence="1">Heme 1 (or BL or b562) is low-potential and absorbs at about 562 nm, and heme 2 (or BH or b566) is high-potential and absorbs at about 566 nm.</text>
</comment>
<comment type="similarity">
    <text evidence="3 4">Belongs to the cytochrome b family.</text>
</comment>
<comment type="caution">
    <text evidence="2">The full-length protein contains only eight transmembrane helices, not nine as predicted by bioinformatics tools.</text>
</comment>
<evidence type="ECO:0000250" key="1"/>
<evidence type="ECO:0000250" key="2">
    <source>
        <dbReference type="UniProtKB" id="P00157"/>
    </source>
</evidence>
<evidence type="ECO:0000255" key="3">
    <source>
        <dbReference type="PROSITE-ProRule" id="PRU00967"/>
    </source>
</evidence>
<evidence type="ECO:0000255" key="4">
    <source>
        <dbReference type="PROSITE-ProRule" id="PRU00968"/>
    </source>
</evidence>
<reference key="1">
    <citation type="journal article" date="1992" name="Proc. R. Soc. B">
        <title>Phylogenetic relationships of the thylacine (Mammalia: Thylacinidae) among dasyuroid marsupials: evidence from cytochrome b DNA sequences.</title>
        <authorList>
            <person name="Krajewski C."/>
            <person name="Driskell A.C."/>
            <person name="Baverstock P.R."/>
            <person name="Braun M.J."/>
        </authorList>
    </citation>
    <scope>NUCLEOTIDE SEQUENCE [GENOMIC DNA]</scope>
</reference>
<proteinExistence type="inferred from homology"/>